<sequence length="180" mass="20473">MYSGKIGYIIYPQISMEFSATYQPKYRLHYSLQHKNLINGLTIPKTIGNTTIVSNIYMLNLIYDLEKIKTFTPFIILGGGITRVKVKSTSSKWSLINNDYFKVHRTSKNCVTWQAGLGIAQHITPDLSIDATAKLQTAYRVRINYDTLDMKTVQLMNANSIKKTISVGEFGIGFTYRLPF</sequence>
<keyword id="KW-1185">Reference proteome</keyword>
<name>Y788_RICPR</name>
<proteinExistence type="predicted"/>
<protein>
    <recommendedName>
        <fullName>Uncharacterized protein RP788</fullName>
    </recommendedName>
</protein>
<dbReference type="EMBL" id="Y11779">
    <property type="protein sequence ID" value="CAA72462.1"/>
    <property type="molecule type" value="Genomic_DNA"/>
</dbReference>
<dbReference type="EMBL" id="AJ235273">
    <property type="protein sequence ID" value="CAA15214.1"/>
    <property type="molecule type" value="Genomic_DNA"/>
</dbReference>
<dbReference type="PIR" id="F71639">
    <property type="entry name" value="F71639"/>
</dbReference>
<dbReference type="RefSeq" id="NP_221138.1">
    <property type="nucleotide sequence ID" value="NC_000963.1"/>
</dbReference>
<dbReference type="STRING" id="272947.gene:17555857"/>
<dbReference type="EnsemblBacteria" id="CAA15214">
    <property type="protein sequence ID" value="CAA15214"/>
    <property type="gene ID" value="CAA15214"/>
</dbReference>
<dbReference type="KEGG" id="rpr:RP788"/>
<dbReference type="PATRIC" id="fig|272947.5.peg.824"/>
<dbReference type="eggNOG" id="COG3637">
    <property type="taxonomic scope" value="Bacteria"/>
</dbReference>
<dbReference type="HOGENOM" id="CLU_101383_0_0_5"/>
<dbReference type="OrthoDB" id="7160701at2"/>
<dbReference type="Proteomes" id="UP000002480">
    <property type="component" value="Chromosome"/>
</dbReference>
<dbReference type="Gene3D" id="2.40.160.20">
    <property type="match status" value="1"/>
</dbReference>
<dbReference type="InterPro" id="IPR011250">
    <property type="entry name" value="OMP/PagP_b-brl"/>
</dbReference>
<dbReference type="SUPFAM" id="SSF56925">
    <property type="entry name" value="OMPA-like"/>
    <property type="match status" value="1"/>
</dbReference>
<accession>O05978</accession>
<gene>
    <name type="ordered locus">RP788</name>
</gene>
<reference key="1">
    <citation type="journal article" date="1997" name="Microbiology">
        <title>Genomic rearrangements during evolution of the obligate intracellular parasite Rickettsia prowazekii as inferred from an analysis of 52015 bp nucleotide sequence.</title>
        <authorList>
            <person name="Andersson J.O."/>
            <person name="Andersson S.G.E."/>
        </authorList>
    </citation>
    <scope>NUCLEOTIDE SEQUENCE [GENOMIC DNA]</scope>
    <source>
        <strain>Madrid E</strain>
    </source>
</reference>
<reference key="2">
    <citation type="journal article" date="1998" name="Nature">
        <title>The genome sequence of Rickettsia prowazekii and the origin of mitochondria.</title>
        <authorList>
            <person name="Andersson S.G.E."/>
            <person name="Zomorodipour A."/>
            <person name="Andersson J.O."/>
            <person name="Sicheritz-Ponten T."/>
            <person name="Alsmark U.C.M."/>
            <person name="Podowski R.M."/>
            <person name="Naeslund A.K."/>
            <person name="Eriksson A.-S."/>
            <person name="Winkler H.H."/>
            <person name="Kurland C.G."/>
        </authorList>
    </citation>
    <scope>NUCLEOTIDE SEQUENCE [LARGE SCALE GENOMIC DNA]</scope>
    <source>
        <strain>Madrid E</strain>
    </source>
</reference>
<organism>
    <name type="scientific">Rickettsia prowazekii (strain Madrid E)</name>
    <dbReference type="NCBI Taxonomy" id="272947"/>
    <lineage>
        <taxon>Bacteria</taxon>
        <taxon>Pseudomonadati</taxon>
        <taxon>Pseudomonadota</taxon>
        <taxon>Alphaproteobacteria</taxon>
        <taxon>Rickettsiales</taxon>
        <taxon>Rickettsiaceae</taxon>
        <taxon>Rickettsieae</taxon>
        <taxon>Rickettsia</taxon>
        <taxon>typhus group</taxon>
    </lineage>
</organism>
<feature type="chain" id="PRO_0000101417" description="Uncharacterized protein RP788">
    <location>
        <begin position="1"/>
        <end position="180"/>
    </location>
</feature>